<name>THO4B_XENLA</name>
<sequence>MGDKMDMSLDDIIKLNRSQRTADRGRGRGRGVRGGSARGGAVGRVGGGRGGAAGVGVPMRSRPVLSRGGRNRPTPYSRPKQLPDKWQHDLFDSGFGTGAGMETGGKLLVSNLDFGVSDADIQELFAEFGSLKKAAVHYDRSGRSLGTADVHFERKADALKAMKQYNGVPLDGRSMNIQLVTSQIEAQRRPIQSQSRGGGVARPRGGAIGFAAGGNRRDRGANRGRGRGAGRNPKQQLSAEELDAQLDAYNARMDTS</sequence>
<evidence type="ECO:0000250" key="1">
    <source>
        <dbReference type="UniProtKB" id="Q86V81"/>
    </source>
</evidence>
<evidence type="ECO:0000255" key="2">
    <source>
        <dbReference type="PROSITE-ProRule" id="PRU00176"/>
    </source>
</evidence>
<evidence type="ECO:0000256" key="3">
    <source>
        <dbReference type="SAM" id="MobiDB-lite"/>
    </source>
</evidence>
<evidence type="ECO:0000305" key="4"/>
<proteinExistence type="evidence at transcript level"/>
<protein>
    <recommendedName>
        <fullName>THO complex subunit 4-B</fullName>
        <shortName>Tho4-B</shortName>
    </recommendedName>
    <alternativeName>
        <fullName>Aly/REF export factor-B</fullName>
    </alternativeName>
</protein>
<gene>
    <name type="primary">alyref-b</name>
    <name type="synonym">thoc4-b</name>
</gene>
<reference key="1">
    <citation type="submission" date="2004-06" db="EMBL/GenBank/DDBJ databases">
        <authorList>
            <consortium name="NIH - Xenopus Gene Collection (XGC) project"/>
        </authorList>
    </citation>
    <scope>NUCLEOTIDE SEQUENCE [LARGE SCALE MRNA]</scope>
    <source>
        <tissue>Brain</tissue>
    </source>
</reference>
<dbReference type="EMBL" id="BC074336">
    <property type="protein sequence ID" value="AAH74336.1"/>
    <property type="molecule type" value="mRNA"/>
</dbReference>
<dbReference type="RefSeq" id="NP_001086215.1">
    <property type="nucleotide sequence ID" value="NM_001092746.1"/>
</dbReference>
<dbReference type="SMR" id="Q6GLW1"/>
<dbReference type="DNASU" id="444644"/>
<dbReference type="GeneID" id="444644"/>
<dbReference type="KEGG" id="xla:444644"/>
<dbReference type="AGR" id="Xenbase:XB-GENE-17340719"/>
<dbReference type="CTD" id="444644"/>
<dbReference type="OrthoDB" id="1049195at2759"/>
<dbReference type="Proteomes" id="UP000186698">
    <property type="component" value="Chromosome 9_10S"/>
</dbReference>
<dbReference type="Bgee" id="444644">
    <property type="expression patterns" value="Expressed in egg cell and 19 other cell types or tissues"/>
</dbReference>
<dbReference type="GO" id="GO:0005737">
    <property type="term" value="C:cytoplasm"/>
    <property type="evidence" value="ECO:0000250"/>
    <property type="project" value="UniProtKB"/>
</dbReference>
<dbReference type="GO" id="GO:0016607">
    <property type="term" value="C:nuclear speck"/>
    <property type="evidence" value="ECO:0007669"/>
    <property type="project" value="UniProtKB-SubCell"/>
</dbReference>
<dbReference type="GO" id="GO:0005634">
    <property type="term" value="C:nucleus"/>
    <property type="evidence" value="ECO:0000250"/>
    <property type="project" value="UniProtKB"/>
</dbReference>
<dbReference type="GO" id="GO:0062153">
    <property type="term" value="F:C5-methylcytidine-containing RNA reader activity"/>
    <property type="evidence" value="ECO:0000250"/>
    <property type="project" value="UniProtKB"/>
</dbReference>
<dbReference type="GO" id="GO:0003729">
    <property type="term" value="F:mRNA binding"/>
    <property type="evidence" value="ECO:0000318"/>
    <property type="project" value="GO_Central"/>
</dbReference>
<dbReference type="GO" id="GO:0006406">
    <property type="term" value="P:mRNA export from nucleus"/>
    <property type="evidence" value="ECO:0000318"/>
    <property type="project" value="GO_Central"/>
</dbReference>
<dbReference type="GO" id="GO:0006397">
    <property type="term" value="P:mRNA processing"/>
    <property type="evidence" value="ECO:0007669"/>
    <property type="project" value="UniProtKB-KW"/>
</dbReference>
<dbReference type="GO" id="GO:0006405">
    <property type="term" value="P:RNA export from nucleus"/>
    <property type="evidence" value="ECO:0000250"/>
    <property type="project" value="UniProtKB"/>
</dbReference>
<dbReference type="GO" id="GO:0008380">
    <property type="term" value="P:RNA splicing"/>
    <property type="evidence" value="ECO:0007669"/>
    <property type="project" value="UniProtKB-KW"/>
</dbReference>
<dbReference type="CDD" id="cd12680">
    <property type="entry name" value="RRM_THOC4"/>
    <property type="match status" value="1"/>
</dbReference>
<dbReference type="FunFam" id="3.30.70.330:FF:000273">
    <property type="entry name" value="THO complex subunit 4"/>
    <property type="match status" value="1"/>
</dbReference>
<dbReference type="Gene3D" id="3.30.70.330">
    <property type="match status" value="1"/>
</dbReference>
<dbReference type="InterPro" id="IPR051229">
    <property type="entry name" value="ALYREF_mRNA_export"/>
</dbReference>
<dbReference type="InterPro" id="IPR025715">
    <property type="entry name" value="FoP_C"/>
</dbReference>
<dbReference type="InterPro" id="IPR012677">
    <property type="entry name" value="Nucleotide-bd_a/b_plait_sf"/>
</dbReference>
<dbReference type="InterPro" id="IPR035979">
    <property type="entry name" value="RBD_domain_sf"/>
</dbReference>
<dbReference type="InterPro" id="IPR000504">
    <property type="entry name" value="RRM_dom"/>
</dbReference>
<dbReference type="PANTHER" id="PTHR19965">
    <property type="entry name" value="RNA AND EXPORT FACTOR BINDING PROTEIN"/>
    <property type="match status" value="1"/>
</dbReference>
<dbReference type="PANTHER" id="PTHR19965:SF82">
    <property type="entry name" value="THO COMPLEX SUBUNIT 4"/>
    <property type="match status" value="1"/>
</dbReference>
<dbReference type="Pfam" id="PF13865">
    <property type="entry name" value="FoP_duplication"/>
    <property type="match status" value="1"/>
</dbReference>
<dbReference type="Pfam" id="PF00076">
    <property type="entry name" value="RRM_1"/>
    <property type="match status" value="1"/>
</dbReference>
<dbReference type="SMART" id="SM01218">
    <property type="entry name" value="FoP_duplication"/>
    <property type="match status" value="1"/>
</dbReference>
<dbReference type="SMART" id="SM00360">
    <property type="entry name" value="RRM"/>
    <property type="match status" value="1"/>
</dbReference>
<dbReference type="SUPFAM" id="SSF54928">
    <property type="entry name" value="RNA-binding domain, RBD"/>
    <property type="match status" value="1"/>
</dbReference>
<dbReference type="PROSITE" id="PS50102">
    <property type="entry name" value="RRM"/>
    <property type="match status" value="1"/>
</dbReference>
<feature type="chain" id="PRO_0000378581" description="THO complex subunit 4-B">
    <location>
        <begin position="1"/>
        <end position="256"/>
    </location>
</feature>
<feature type="domain" description="RRM" evidence="2">
    <location>
        <begin position="105"/>
        <end position="182"/>
    </location>
</feature>
<feature type="region of interest" description="Disordered" evidence="3">
    <location>
        <begin position="15"/>
        <end position="85"/>
    </location>
</feature>
<feature type="region of interest" description="Disordered" evidence="3">
    <location>
        <begin position="186"/>
        <end position="256"/>
    </location>
</feature>
<feature type="compositionally biased region" description="Basic and acidic residues" evidence="3">
    <location>
        <begin position="15"/>
        <end position="26"/>
    </location>
</feature>
<feature type="compositionally biased region" description="Gly residues" evidence="3">
    <location>
        <begin position="32"/>
        <end position="54"/>
    </location>
</feature>
<feature type="compositionally biased region" description="Polar residues" evidence="3">
    <location>
        <begin position="186"/>
        <end position="195"/>
    </location>
</feature>
<feature type="compositionally biased region" description="Gly residues" evidence="3">
    <location>
        <begin position="196"/>
        <end position="212"/>
    </location>
</feature>
<comment type="function">
    <text evidence="1">Functions as an mRNA export adapter; component of the transcription/export (TREX) complex which is thought to couple mRNA transcription, processing and nuclear export, and specifically associates with spliced mRNA and not with unspliced pre-mRNA. TREX is recruited to spliced mRNAs by a transcription-independent mechanism, binds to mRNA upstream of the exon-junction complex (EJC) and is recruited in a splicing- and cap-dependent manner to a region near the 5' end of the mRNA where it functions in mRNA export to the cytoplasm via the TAP/NXF1 pathway. Involved in the nuclear export of intronless mRNA; proposed to be recruited to intronless mRNA by ATP-bound DDX39B. Plays a key role in mRNP recognition and mRNA packaging by bridging the mRNP-bound EJC and the TREX core complex. TREX recruitment occurs via an interaction between ALYREF/THOC4 and the cap-binding protein NCBP1. Required for TREX complex assembly and for linking DDX39B to the cap-binding complex (CBC). Binds mRNA which is thought to be transferred to the NXF1-NXT1 heterodimer for export (TAP/NXF1 pathway). In conjunction with THOC5 functions in NXF1-NXT1 mediated nuclear export of HSP70 mRNA; both proteins enhance the RNA binding activity of NXF1 and are required for NXF1 localization to the nuclear rim. Involved in mRNA export of C5-methylcytosine (m5C)-containing mRNAs: specifically recognizes and binds m5C mRNAs and mediates their nucleo-cytoplasmic shuttling. Acts as a chaperone and promotes the dimerization of transcription factors containing basic leucine zipper (bZIP) domains and thereby promotes transcriptional activation. Involved in transcription elongation and genome stability (By similarity).</text>
</comment>
<comment type="subunit">
    <text evidence="1">Component of the transcription/export (TREX) complex; TREX seems to have a dynamic structure involving ATP-dependent remodeling (By similarity).</text>
</comment>
<comment type="subcellular location">
    <subcellularLocation>
        <location evidence="1">Nucleus</location>
    </subcellularLocation>
    <subcellularLocation>
        <location evidence="1">Nucleus speckle</location>
    </subcellularLocation>
    <subcellularLocation>
        <location evidence="1">Cytoplasm</location>
    </subcellularLocation>
    <text evidence="1">Travels to the cytoplasm as part of the exon junction complex (EJC) bound to mRNA.</text>
</comment>
<comment type="similarity">
    <text evidence="4">Belongs to the ALYREF family.</text>
</comment>
<organism>
    <name type="scientific">Xenopus laevis</name>
    <name type="common">African clawed frog</name>
    <dbReference type="NCBI Taxonomy" id="8355"/>
    <lineage>
        <taxon>Eukaryota</taxon>
        <taxon>Metazoa</taxon>
        <taxon>Chordata</taxon>
        <taxon>Craniata</taxon>
        <taxon>Vertebrata</taxon>
        <taxon>Euteleostomi</taxon>
        <taxon>Amphibia</taxon>
        <taxon>Batrachia</taxon>
        <taxon>Anura</taxon>
        <taxon>Pipoidea</taxon>
        <taxon>Pipidae</taxon>
        <taxon>Xenopodinae</taxon>
        <taxon>Xenopus</taxon>
        <taxon>Xenopus</taxon>
    </lineage>
</organism>
<accession>Q6GLW1</accession>
<keyword id="KW-0143">Chaperone</keyword>
<keyword id="KW-0963">Cytoplasm</keyword>
<keyword id="KW-0507">mRNA processing</keyword>
<keyword id="KW-0508">mRNA splicing</keyword>
<keyword id="KW-0509">mRNA transport</keyword>
<keyword id="KW-0539">Nucleus</keyword>
<keyword id="KW-1185">Reference proteome</keyword>
<keyword id="KW-0694">RNA-binding</keyword>
<keyword id="KW-0813">Transport</keyword>